<evidence type="ECO:0000255" key="1">
    <source>
        <dbReference type="HAMAP-Rule" id="MF_01350"/>
    </source>
</evidence>
<proteinExistence type="inferred from homology"/>
<comment type="function">
    <text evidence="1">NDH-1 shuttles electrons from NADH, via FMN and iron-sulfur (Fe-S) centers, to quinones in the respiratory chain. The immediate electron acceptor for the enzyme in this species is believed to be ubiquinone. Couples the redox reaction to proton translocation (for every two electrons transferred, four hydrogen ions are translocated across the cytoplasmic membrane), and thus conserves the redox energy in a proton gradient. This subunit may bind ubiquinone.</text>
</comment>
<comment type="catalytic activity">
    <reaction evidence="1">
        <text>a quinone + NADH + 5 H(+)(in) = a quinol + NAD(+) + 4 H(+)(out)</text>
        <dbReference type="Rhea" id="RHEA:57888"/>
        <dbReference type="ChEBI" id="CHEBI:15378"/>
        <dbReference type="ChEBI" id="CHEBI:24646"/>
        <dbReference type="ChEBI" id="CHEBI:57540"/>
        <dbReference type="ChEBI" id="CHEBI:57945"/>
        <dbReference type="ChEBI" id="CHEBI:132124"/>
    </reaction>
</comment>
<comment type="subunit">
    <text evidence="1">NDH-1 is composed of 14 different subunits. Subunits NuoA, H, J, K, L, M, N constitute the membrane sector of the complex.</text>
</comment>
<comment type="subcellular location">
    <subcellularLocation>
        <location evidence="1">Cell inner membrane</location>
        <topology evidence="1">Multi-pass membrane protein</topology>
    </subcellularLocation>
</comment>
<comment type="similarity">
    <text evidence="1">Belongs to the complex I subunit 1 family.</text>
</comment>
<protein>
    <recommendedName>
        <fullName evidence="1">NADH-quinone oxidoreductase subunit H 2</fullName>
        <ecNumber evidence="1">7.1.1.-</ecNumber>
    </recommendedName>
    <alternativeName>
        <fullName evidence="1">NADH dehydrogenase I subunit H 2</fullName>
    </alternativeName>
    <alternativeName>
        <fullName evidence="1">NDH-1 subunit H 2</fullName>
    </alternativeName>
</protein>
<dbReference type="EC" id="7.1.1.-" evidence="1"/>
<dbReference type="EMBL" id="BX572606">
    <property type="protein sequence ID" value="CAE29699.1"/>
    <property type="molecule type" value="Genomic_DNA"/>
</dbReference>
<dbReference type="RefSeq" id="WP_011159793.1">
    <property type="nucleotide sequence ID" value="NZ_CP116810.1"/>
</dbReference>
<dbReference type="SMR" id="Q6N1Z4"/>
<dbReference type="STRING" id="258594.RPA4258"/>
<dbReference type="GeneID" id="66895384"/>
<dbReference type="eggNOG" id="COG1005">
    <property type="taxonomic scope" value="Bacteria"/>
</dbReference>
<dbReference type="HOGENOM" id="CLU_015134_0_1_5"/>
<dbReference type="PhylomeDB" id="Q6N1Z4"/>
<dbReference type="GO" id="GO:0005886">
    <property type="term" value="C:plasma membrane"/>
    <property type="evidence" value="ECO:0007669"/>
    <property type="project" value="UniProtKB-SubCell"/>
</dbReference>
<dbReference type="GO" id="GO:0003954">
    <property type="term" value="F:NADH dehydrogenase activity"/>
    <property type="evidence" value="ECO:0007669"/>
    <property type="project" value="TreeGrafter"/>
</dbReference>
<dbReference type="GO" id="GO:0016655">
    <property type="term" value="F:oxidoreductase activity, acting on NAD(P)H, quinone or similar compound as acceptor"/>
    <property type="evidence" value="ECO:0007669"/>
    <property type="project" value="UniProtKB-UniRule"/>
</dbReference>
<dbReference type="GO" id="GO:0048038">
    <property type="term" value="F:quinone binding"/>
    <property type="evidence" value="ECO:0007669"/>
    <property type="project" value="UniProtKB-KW"/>
</dbReference>
<dbReference type="GO" id="GO:0009060">
    <property type="term" value="P:aerobic respiration"/>
    <property type="evidence" value="ECO:0007669"/>
    <property type="project" value="TreeGrafter"/>
</dbReference>
<dbReference type="HAMAP" id="MF_01350">
    <property type="entry name" value="NDH1_NuoH"/>
    <property type="match status" value="1"/>
</dbReference>
<dbReference type="InterPro" id="IPR001694">
    <property type="entry name" value="NADH_UbQ_OxRdtase_su1/FPO"/>
</dbReference>
<dbReference type="InterPro" id="IPR018086">
    <property type="entry name" value="NADH_UbQ_OxRdtase_su1_CS"/>
</dbReference>
<dbReference type="NCBIfam" id="NF004740">
    <property type="entry name" value="PRK06076.1-1"/>
    <property type="match status" value="1"/>
</dbReference>
<dbReference type="NCBIfam" id="NF004741">
    <property type="entry name" value="PRK06076.1-2"/>
    <property type="match status" value="1"/>
</dbReference>
<dbReference type="PANTHER" id="PTHR11432">
    <property type="entry name" value="NADH DEHYDROGENASE SUBUNIT 1"/>
    <property type="match status" value="1"/>
</dbReference>
<dbReference type="PANTHER" id="PTHR11432:SF3">
    <property type="entry name" value="NADH-UBIQUINONE OXIDOREDUCTASE CHAIN 1"/>
    <property type="match status" value="1"/>
</dbReference>
<dbReference type="Pfam" id="PF00146">
    <property type="entry name" value="NADHdh"/>
    <property type="match status" value="1"/>
</dbReference>
<dbReference type="PROSITE" id="PS00668">
    <property type="entry name" value="COMPLEX1_ND1_2"/>
    <property type="match status" value="1"/>
</dbReference>
<keyword id="KW-0997">Cell inner membrane</keyword>
<keyword id="KW-1003">Cell membrane</keyword>
<keyword id="KW-0472">Membrane</keyword>
<keyword id="KW-0520">NAD</keyword>
<keyword id="KW-0874">Quinone</keyword>
<keyword id="KW-1278">Translocase</keyword>
<keyword id="KW-0812">Transmembrane</keyword>
<keyword id="KW-1133">Transmembrane helix</keyword>
<keyword id="KW-0830">Ubiquinone</keyword>
<name>NUOH2_RHOPA</name>
<feature type="chain" id="PRO_0000244943" description="NADH-quinone oxidoreductase subunit H 2">
    <location>
        <begin position="1"/>
        <end position="319"/>
    </location>
</feature>
<feature type="transmembrane region" description="Helical" evidence="1">
    <location>
        <begin position="1"/>
        <end position="21"/>
    </location>
</feature>
<feature type="transmembrane region" description="Helical" evidence="1">
    <location>
        <begin position="77"/>
        <end position="97"/>
    </location>
</feature>
<feature type="transmembrane region" description="Helical" evidence="1">
    <location>
        <begin position="107"/>
        <end position="127"/>
    </location>
</feature>
<feature type="transmembrane region" description="Helical" evidence="1">
    <location>
        <begin position="147"/>
        <end position="167"/>
    </location>
</feature>
<feature type="transmembrane region" description="Helical" evidence="1">
    <location>
        <begin position="179"/>
        <end position="199"/>
    </location>
</feature>
<feature type="transmembrane region" description="Helical" evidence="1">
    <location>
        <begin position="214"/>
        <end position="234"/>
    </location>
</feature>
<feature type="transmembrane region" description="Helical" evidence="1">
    <location>
        <begin position="238"/>
        <end position="258"/>
    </location>
</feature>
<feature type="transmembrane region" description="Helical" evidence="1">
    <location>
        <begin position="262"/>
        <end position="282"/>
    </location>
</feature>
<feature type="transmembrane region" description="Helical" evidence="1">
    <location>
        <begin position="293"/>
        <end position="313"/>
    </location>
</feature>
<accession>Q6N1Z4</accession>
<gene>
    <name evidence="1" type="primary">nuoH2</name>
    <name type="ordered locus">RPA4258</name>
</gene>
<reference key="1">
    <citation type="journal article" date="2004" name="Nat. Biotechnol.">
        <title>Complete genome sequence of the metabolically versatile photosynthetic bacterium Rhodopseudomonas palustris.</title>
        <authorList>
            <person name="Larimer F.W."/>
            <person name="Chain P."/>
            <person name="Hauser L."/>
            <person name="Lamerdin J.E."/>
            <person name="Malfatti S."/>
            <person name="Do L."/>
            <person name="Land M.L."/>
            <person name="Pelletier D.A."/>
            <person name="Beatty J.T."/>
            <person name="Lang A.S."/>
            <person name="Tabita F.R."/>
            <person name="Gibson J.L."/>
            <person name="Hanson T.E."/>
            <person name="Bobst C."/>
            <person name="Torres y Torres J.L."/>
            <person name="Peres C."/>
            <person name="Harrison F.H."/>
            <person name="Gibson J."/>
            <person name="Harwood C.S."/>
        </authorList>
    </citation>
    <scope>NUCLEOTIDE SEQUENCE [LARGE SCALE GENOMIC DNA]</scope>
    <source>
        <strain>ATCC BAA-98 / CGA009</strain>
    </source>
</reference>
<sequence length="319" mass="34127">MIGMIITATISVALIMVLLVLAGTFTWVERRLLGFVQERYGPNRVGPFGSLQWVADTVKILTKEDRPPPGADKLLYILAPAVAATPVLAGFGVVAIGDGWALSSVDVGLLFLLGMLGLTAYAAVLGAWASNNRFSLLGGMRAAAQMLAYEVFLGLSLMGVVMIAGSFSMAEIVEAQRGVWFVVLQPLGMALFTIAGIAAAHRLPFDLPESENDLIAGFITEYTGMSFGLFFLGEYLAVLLVSALAVTLFFGGWLGPWLPGPVWFGLKTAVIAVAFVWIRATLPRPRYDQLLSFAWKVALPLSLLNLMLTGIVVVARSAS</sequence>
<organism>
    <name type="scientific">Rhodopseudomonas palustris (strain ATCC BAA-98 / CGA009)</name>
    <dbReference type="NCBI Taxonomy" id="258594"/>
    <lineage>
        <taxon>Bacteria</taxon>
        <taxon>Pseudomonadati</taxon>
        <taxon>Pseudomonadota</taxon>
        <taxon>Alphaproteobacteria</taxon>
        <taxon>Hyphomicrobiales</taxon>
        <taxon>Nitrobacteraceae</taxon>
        <taxon>Rhodopseudomonas</taxon>
    </lineage>
</organism>